<sequence>MDVDRLQEALKDFEKRGKKEVSPELDQFLCHVAKTGETVVQWPQFKEYFVFKLEMVMDDFRTSAPEQRGSPNPNVEYIPFDEMKQRILKIVTGFNGTPFTIQRLCELLTDPRKNYNGTDKFLRGVEKNIMVVSCVYPSSEKNNSTSLNRMNGVMFPSNSQSYTDRSNVNGPGTPRPMIRPKFSLSSPMNTNGLPDSTENKESDLQQKEKSQSDSAVSDDGSQATTSRNKHSAEDSAEVEEHEVKRLKFDPDEEEEAACANPDASSEVSAEMAEEAESASTSADKGKESCQTAQASDEESLMTASESTEAESNERDSENVSVTEESSEESHHMDQSEESESACSLTSDEHNSTAAATTSTEDADPSEEEHLATSSGKSTETLTLSPMENSEEATDAPEEPMEQD</sequence>
<evidence type="ECO:0000250" key="1"/>
<evidence type="ECO:0000256" key="2">
    <source>
        <dbReference type="SAM" id="MobiDB-lite"/>
    </source>
</evidence>
<evidence type="ECO:0000305" key="3"/>
<organism>
    <name type="scientific">Xenopus laevis</name>
    <name type="common">African clawed frog</name>
    <dbReference type="NCBI Taxonomy" id="8355"/>
    <lineage>
        <taxon>Eukaryota</taxon>
        <taxon>Metazoa</taxon>
        <taxon>Chordata</taxon>
        <taxon>Craniata</taxon>
        <taxon>Vertebrata</taxon>
        <taxon>Euteleostomi</taxon>
        <taxon>Amphibia</taxon>
        <taxon>Batrachia</taxon>
        <taxon>Anura</taxon>
        <taxon>Pipoidea</taxon>
        <taxon>Pipidae</taxon>
        <taxon>Xenopodinae</taxon>
        <taxon>Xenopus</taxon>
        <taxon>Xenopus</taxon>
    </lineage>
</organism>
<name>P4R2A_XENLA</name>
<proteinExistence type="evidence at transcript level"/>
<dbReference type="EMBL" id="BC088694">
    <property type="protein sequence ID" value="AAH88694.1"/>
    <property type="molecule type" value="mRNA"/>
</dbReference>
<dbReference type="RefSeq" id="NP_001088887.1">
    <property type="nucleotide sequence ID" value="NM_001095418.1"/>
</dbReference>
<dbReference type="DNASU" id="496232"/>
<dbReference type="GeneID" id="496232"/>
<dbReference type="KEGG" id="xla:496232"/>
<dbReference type="AGR" id="Xenbase:XB-GENE-6252224"/>
<dbReference type="CTD" id="496232"/>
<dbReference type="Xenbase" id="XB-GENE-6252224">
    <property type="gene designation" value="ppp4r2.L"/>
</dbReference>
<dbReference type="OrthoDB" id="341898at2759"/>
<dbReference type="Proteomes" id="UP000186698">
    <property type="component" value="Chromosome 4L"/>
</dbReference>
<dbReference type="Bgee" id="496232">
    <property type="expression patterns" value="Expressed in egg cell and 19 other cell types or tissues"/>
</dbReference>
<dbReference type="GO" id="GO:0005737">
    <property type="term" value="C:cytoplasm"/>
    <property type="evidence" value="ECO:0000318"/>
    <property type="project" value="GO_Central"/>
</dbReference>
<dbReference type="GO" id="GO:0005634">
    <property type="term" value="C:nucleus"/>
    <property type="evidence" value="ECO:0000318"/>
    <property type="project" value="GO_Central"/>
</dbReference>
<dbReference type="GO" id="GO:0030289">
    <property type="term" value="C:protein phosphatase 4 complex"/>
    <property type="evidence" value="ECO:0000318"/>
    <property type="project" value="GO_Central"/>
</dbReference>
<dbReference type="GO" id="GO:0019888">
    <property type="term" value="F:protein phosphatase regulator activity"/>
    <property type="evidence" value="ECO:0000318"/>
    <property type="project" value="GO_Central"/>
</dbReference>
<dbReference type="InterPro" id="IPR015267">
    <property type="entry name" value="PPP4R2"/>
</dbReference>
<dbReference type="PANTHER" id="PTHR16487">
    <property type="entry name" value="PPP4R2-RELATED PROTEIN"/>
    <property type="match status" value="1"/>
</dbReference>
<dbReference type="PANTHER" id="PTHR16487:SF0">
    <property type="entry name" value="PROTEIN PHOSPHATASE 4 REGULATORY SUBUNIT 2-RELATED"/>
    <property type="match status" value="1"/>
</dbReference>
<dbReference type="Pfam" id="PF09184">
    <property type="entry name" value="PPP4R2"/>
    <property type="match status" value="1"/>
</dbReference>
<keyword id="KW-1185">Reference proteome</keyword>
<accession>Q5M7D6</accession>
<feature type="chain" id="PRO_0000299372" description="Serine/threonine-protein phosphatase 4 regulatory subunit 2-A">
    <location>
        <begin position="1"/>
        <end position="403"/>
    </location>
</feature>
<feature type="region of interest" description="Disordered" evidence="2">
    <location>
        <begin position="140"/>
        <end position="403"/>
    </location>
</feature>
<feature type="compositionally biased region" description="Polar residues" evidence="2">
    <location>
        <begin position="140"/>
        <end position="149"/>
    </location>
</feature>
<feature type="compositionally biased region" description="Polar residues" evidence="2">
    <location>
        <begin position="156"/>
        <end position="170"/>
    </location>
</feature>
<feature type="compositionally biased region" description="Polar residues" evidence="2">
    <location>
        <begin position="183"/>
        <end position="196"/>
    </location>
</feature>
<feature type="compositionally biased region" description="Basic and acidic residues" evidence="2">
    <location>
        <begin position="197"/>
        <end position="211"/>
    </location>
</feature>
<feature type="compositionally biased region" description="Polar residues" evidence="2">
    <location>
        <begin position="212"/>
        <end position="226"/>
    </location>
</feature>
<feature type="compositionally biased region" description="Polar residues" evidence="2">
    <location>
        <begin position="371"/>
        <end position="387"/>
    </location>
</feature>
<feature type="compositionally biased region" description="Acidic residues" evidence="2">
    <location>
        <begin position="388"/>
        <end position="403"/>
    </location>
</feature>
<reference key="1">
    <citation type="submission" date="2004-12" db="EMBL/GenBank/DDBJ databases">
        <authorList>
            <consortium name="NIH - Xenopus Gene Collection (XGC) project"/>
        </authorList>
    </citation>
    <scope>NUCLEOTIDE SEQUENCE [LARGE SCALE MRNA]</scope>
    <source>
        <tissue>Testis</tissue>
    </source>
</reference>
<protein>
    <recommendedName>
        <fullName>Serine/threonine-protein phosphatase 4 regulatory subunit 2-A</fullName>
    </recommendedName>
</protein>
<gene>
    <name type="primary">ppp4r2-a</name>
</gene>
<comment type="function">
    <text evidence="1">Regulatory subunit of serine/threonine-protein phosphatase 4 (PP4).</text>
</comment>
<comment type="subunit">
    <text evidence="1">Serine/threonine-protein phosphatase 4 (PP4) occurs in different assemblies of the catalytic and one or more regulatory subunits.</text>
</comment>
<comment type="similarity">
    <text evidence="3">Belongs to the PPP4R2 family.</text>
</comment>